<evidence type="ECO:0000255" key="1">
    <source>
        <dbReference type="HAMAP-Rule" id="MF_00123"/>
    </source>
</evidence>
<organism>
    <name type="scientific">Thermosynechococcus vestitus (strain NIES-2133 / IAM M-273 / BP-1)</name>
    <dbReference type="NCBI Taxonomy" id="197221"/>
    <lineage>
        <taxon>Bacteria</taxon>
        <taxon>Bacillati</taxon>
        <taxon>Cyanobacteriota</taxon>
        <taxon>Cyanophyceae</taxon>
        <taxon>Acaryochloridales</taxon>
        <taxon>Thermosynechococcaceae</taxon>
        <taxon>Thermosynechococcus</taxon>
    </lineage>
</organism>
<sequence>MVAPIKILGDRLRRALQAALPLDTYPQPLLVPASQVKFGDYQSNVCLSLAKQLGKAPRELAQEVVPHLEVEDLCQPVEIAGPGFLNFRLKPEFLAATLQAARGSDRLGIPPAREPRRVVVDFSSPNIAKEMHVGHLRSTIIGDCIARILEFQGHTVLRLNHVGDWGTQFGMLIAYLDEVYPDALTTANALDLGDLVTFYKKAKQRFDSDPEFQQKARAKVVALQQGEEQSRRAWQLLCEQSRREFQKIYDLLDIQLTERGESFYNPFLPAVIEDLAACGLLVEDQGAKVVFLEGFTNKEGQPQPLIIQKSDGGYNYATTDLAALRYRIDKDQADWIIYVTDVGQSTHFAQVFQVAQRAGWVPPHVTLTHVPFGLVLGEDGKRLKTRSGETIRLIDLLTEAIARSRADLEQRLATEGRTESPEFIDTVARAIGIGAVKYADLSQNRNSNYVFSYDKMLSLQGNTAPYLLYAYVRVQGLTRRGDIDWCTLSPDSPLLLEDETEQHLAKHLVQLEETLDLVSTELLPNRLCQYLFELSQLFNQFYDRCPILSAPQPTKQSRLTLAYLTAQTLKLGLSLLGIPVLDRI</sequence>
<dbReference type="EC" id="6.1.1.19" evidence="1"/>
<dbReference type="EMBL" id="BA000039">
    <property type="protein sequence ID" value="BAC08377.1"/>
    <property type="molecule type" value="Genomic_DNA"/>
</dbReference>
<dbReference type="RefSeq" id="NP_681615.1">
    <property type="nucleotide sequence ID" value="NC_004113.1"/>
</dbReference>
<dbReference type="RefSeq" id="WP_011056669.1">
    <property type="nucleotide sequence ID" value="NC_004113.1"/>
</dbReference>
<dbReference type="SMR" id="Q8DKN4"/>
<dbReference type="STRING" id="197221.gene:10747417"/>
<dbReference type="EnsemblBacteria" id="BAC08377">
    <property type="protein sequence ID" value="BAC08377"/>
    <property type="gene ID" value="BAC08377"/>
</dbReference>
<dbReference type="KEGG" id="tel:tll0826"/>
<dbReference type="PATRIC" id="fig|197221.4.peg.870"/>
<dbReference type="eggNOG" id="COG0018">
    <property type="taxonomic scope" value="Bacteria"/>
</dbReference>
<dbReference type="Proteomes" id="UP000000440">
    <property type="component" value="Chromosome"/>
</dbReference>
<dbReference type="GO" id="GO:0005737">
    <property type="term" value="C:cytoplasm"/>
    <property type="evidence" value="ECO:0007669"/>
    <property type="project" value="UniProtKB-SubCell"/>
</dbReference>
<dbReference type="GO" id="GO:0004814">
    <property type="term" value="F:arginine-tRNA ligase activity"/>
    <property type="evidence" value="ECO:0007669"/>
    <property type="project" value="UniProtKB-UniRule"/>
</dbReference>
<dbReference type="GO" id="GO:0005524">
    <property type="term" value="F:ATP binding"/>
    <property type="evidence" value="ECO:0007669"/>
    <property type="project" value="UniProtKB-UniRule"/>
</dbReference>
<dbReference type="GO" id="GO:0006420">
    <property type="term" value="P:arginyl-tRNA aminoacylation"/>
    <property type="evidence" value="ECO:0007669"/>
    <property type="project" value="UniProtKB-UniRule"/>
</dbReference>
<dbReference type="CDD" id="cd00671">
    <property type="entry name" value="ArgRS_core"/>
    <property type="match status" value="1"/>
</dbReference>
<dbReference type="FunFam" id="3.40.50.620:FF:000030">
    <property type="entry name" value="Arginine--tRNA ligase"/>
    <property type="match status" value="1"/>
</dbReference>
<dbReference type="FunFam" id="1.10.730.10:FF:000006">
    <property type="entry name" value="Arginyl-tRNA synthetase 2, mitochondrial"/>
    <property type="match status" value="1"/>
</dbReference>
<dbReference type="Gene3D" id="3.30.1360.70">
    <property type="entry name" value="Arginyl tRNA synthetase N-terminal domain"/>
    <property type="match status" value="1"/>
</dbReference>
<dbReference type="Gene3D" id="3.40.50.620">
    <property type="entry name" value="HUPs"/>
    <property type="match status" value="1"/>
</dbReference>
<dbReference type="Gene3D" id="1.10.730.10">
    <property type="entry name" value="Isoleucyl-tRNA Synthetase, Domain 1"/>
    <property type="match status" value="1"/>
</dbReference>
<dbReference type="HAMAP" id="MF_00123">
    <property type="entry name" value="Arg_tRNA_synth"/>
    <property type="match status" value="1"/>
</dbReference>
<dbReference type="InterPro" id="IPR001412">
    <property type="entry name" value="aa-tRNA-synth_I_CS"/>
</dbReference>
<dbReference type="InterPro" id="IPR001278">
    <property type="entry name" value="Arg-tRNA-ligase"/>
</dbReference>
<dbReference type="InterPro" id="IPR005148">
    <property type="entry name" value="Arg-tRNA-synth_N"/>
</dbReference>
<dbReference type="InterPro" id="IPR036695">
    <property type="entry name" value="Arg-tRNA-synth_N_sf"/>
</dbReference>
<dbReference type="InterPro" id="IPR035684">
    <property type="entry name" value="ArgRS_core"/>
</dbReference>
<dbReference type="InterPro" id="IPR008909">
    <property type="entry name" value="DALR_anticod-bd"/>
</dbReference>
<dbReference type="InterPro" id="IPR014729">
    <property type="entry name" value="Rossmann-like_a/b/a_fold"/>
</dbReference>
<dbReference type="InterPro" id="IPR009080">
    <property type="entry name" value="tRNAsynth_Ia_anticodon-bd"/>
</dbReference>
<dbReference type="NCBIfam" id="TIGR00456">
    <property type="entry name" value="argS"/>
    <property type="match status" value="1"/>
</dbReference>
<dbReference type="PANTHER" id="PTHR11956:SF5">
    <property type="entry name" value="ARGININE--TRNA LIGASE, CYTOPLASMIC"/>
    <property type="match status" value="1"/>
</dbReference>
<dbReference type="PANTHER" id="PTHR11956">
    <property type="entry name" value="ARGINYL-TRNA SYNTHETASE"/>
    <property type="match status" value="1"/>
</dbReference>
<dbReference type="Pfam" id="PF03485">
    <property type="entry name" value="Arg_tRNA_synt_N"/>
    <property type="match status" value="1"/>
</dbReference>
<dbReference type="Pfam" id="PF05746">
    <property type="entry name" value="DALR_1"/>
    <property type="match status" value="1"/>
</dbReference>
<dbReference type="Pfam" id="PF00750">
    <property type="entry name" value="tRNA-synt_1d"/>
    <property type="match status" value="1"/>
</dbReference>
<dbReference type="PRINTS" id="PR01038">
    <property type="entry name" value="TRNASYNTHARG"/>
</dbReference>
<dbReference type="SMART" id="SM01016">
    <property type="entry name" value="Arg_tRNA_synt_N"/>
    <property type="match status" value="1"/>
</dbReference>
<dbReference type="SMART" id="SM00836">
    <property type="entry name" value="DALR_1"/>
    <property type="match status" value="1"/>
</dbReference>
<dbReference type="SUPFAM" id="SSF47323">
    <property type="entry name" value="Anticodon-binding domain of a subclass of class I aminoacyl-tRNA synthetases"/>
    <property type="match status" value="1"/>
</dbReference>
<dbReference type="SUPFAM" id="SSF55190">
    <property type="entry name" value="Arginyl-tRNA synthetase (ArgRS), N-terminal 'additional' domain"/>
    <property type="match status" value="1"/>
</dbReference>
<dbReference type="SUPFAM" id="SSF52374">
    <property type="entry name" value="Nucleotidylyl transferase"/>
    <property type="match status" value="1"/>
</dbReference>
<dbReference type="PROSITE" id="PS00178">
    <property type="entry name" value="AA_TRNA_LIGASE_I"/>
    <property type="match status" value="1"/>
</dbReference>
<accession>Q8DKN4</accession>
<name>SYR_THEVB</name>
<protein>
    <recommendedName>
        <fullName evidence="1">Arginine--tRNA ligase</fullName>
        <ecNumber evidence="1">6.1.1.19</ecNumber>
    </recommendedName>
    <alternativeName>
        <fullName evidence="1">Arginyl-tRNA synthetase</fullName>
        <shortName evidence="1">ArgRS</shortName>
    </alternativeName>
</protein>
<feature type="chain" id="PRO_0000151624" description="Arginine--tRNA ligase">
    <location>
        <begin position="1"/>
        <end position="584"/>
    </location>
</feature>
<feature type="short sequence motif" description="'HIGH' region">
    <location>
        <begin position="125"/>
        <end position="135"/>
    </location>
</feature>
<comment type="catalytic activity">
    <reaction evidence="1">
        <text>tRNA(Arg) + L-arginine + ATP = L-arginyl-tRNA(Arg) + AMP + diphosphate</text>
        <dbReference type="Rhea" id="RHEA:20301"/>
        <dbReference type="Rhea" id="RHEA-COMP:9658"/>
        <dbReference type="Rhea" id="RHEA-COMP:9673"/>
        <dbReference type="ChEBI" id="CHEBI:30616"/>
        <dbReference type="ChEBI" id="CHEBI:32682"/>
        <dbReference type="ChEBI" id="CHEBI:33019"/>
        <dbReference type="ChEBI" id="CHEBI:78442"/>
        <dbReference type="ChEBI" id="CHEBI:78513"/>
        <dbReference type="ChEBI" id="CHEBI:456215"/>
        <dbReference type="EC" id="6.1.1.19"/>
    </reaction>
</comment>
<comment type="subunit">
    <text evidence="1">Monomer.</text>
</comment>
<comment type="subcellular location">
    <subcellularLocation>
        <location evidence="1">Cytoplasm</location>
    </subcellularLocation>
</comment>
<comment type="similarity">
    <text evidence="1">Belongs to the class-I aminoacyl-tRNA synthetase family.</text>
</comment>
<gene>
    <name evidence="1" type="primary">argS</name>
    <name type="ordered locus">tll0826</name>
</gene>
<keyword id="KW-0030">Aminoacyl-tRNA synthetase</keyword>
<keyword id="KW-0067">ATP-binding</keyword>
<keyword id="KW-0963">Cytoplasm</keyword>
<keyword id="KW-0436">Ligase</keyword>
<keyword id="KW-0547">Nucleotide-binding</keyword>
<keyword id="KW-0648">Protein biosynthesis</keyword>
<keyword id="KW-1185">Reference proteome</keyword>
<reference key="1">
    <citation type="journal article" date="2002" name="DNA Res.">
        <title>Complete genome structure of the thermophilic cyanobacterium Thermosynechococcus elongatus BP-1.</title>
        <authorList>
            <person name="Nakamura Y."/>
            <person name="Kaneko T."/>
            <person name="Sato S."/>
            <person name="Ikeuchi M."/>
            <person name="Katoh H."/>
            <person name="Sasamoto S."/>
            <person name="Watanabe A."/>
            <person name="Iriguchi M."/>
            <person name="Kawashima K."/>
            <person name="Kimura T."/>
            <person name="Kishida Y."/>
            <person name="Kiyokawa C."/>
            <person name="Kohara M."/>
            <person name="Matsumoto M."/>
            <person name="Matsuno A."/>
            <person name="Nakazaki N."/>
            <person name="Shimpo S."/>
            <person name="Sugimoto M."/>
            <person name="Takeuchi C."/>
            <person name="Yamada M."/>
            <person name="Tabata S."/>
        </authorList>
    </citation>
    <scope>NUCLEOTIDE SEQUENCE [LARGE SCALE GENOMIC DNA]</scope>
    <source>
        <strain>NIES-2133 / IAM M-273 / BP-1</strain>
    </source>
</reference>
<proteinExistence type="inferred from homology"/>